<organism>
    <name type="scientific">Aspergillus oryzae (strain ATCC 42149 / RIB 40)</name>
    <name type="common">Yellow koji mold</name>
    <dbReference type="NCBI Taxonomy" id="510516"/>
    <lineage>
        <taxon>Eukaryota</taxon>
        <taxon>Fungi</taxon>
        <taxon>Dikarya</taxon>
        <taxon>Ascomycota</taxon>
        <taxon>Pezizomycotina</taxon>
        <taxon>Eurotiomycetes</taxon>
        <taxon>Eurotiomycetidae</taxon>
        <taxon>Eurotiales</taxon>
        <taxon>Aspergillaceae</taxon>
        <taxon>Aspergillus</taxon>
        <taxon>Aspergillus subgen. Circumdati</taxon>
    </lineage>
</organism>
<dbReference type="EMBL" id="BA000053">
    <property type="protein sequence ID" value="BAE63017.1"/>
    <property type="status" value="ALT_SEQ"/>
    <property type="molecule type" value="Genomic_DNA"/>
</dbReference>
<dbReference type="RefSeq" id="XP_001824150.2">
    <property type="nucleotide sequence ID" value="XM_001824098.2"/>
</dbReference>
<dbReference type="SMR" id="Q2U5Z8"/>
<dbReference type="STRING" id="510516.Q2U5Z8"/>
<dbReference type="VEuPathDB" id="FungiDB:AO090120000439"/>
<dbReference type="Proteomes" id="UP000006564">
    <property type="component" value="Chromosome 5"/>
</dbReference>
<dbReference type="GO" id="GO:0005741">
    <property type="term" value="C:mitochondrial outer membrane"/>
    <property type="evidence" value="ECO:0007669"/>
    <property type="project" value="UniProtKB-SubCell"/>
</dbReference>
<dbReference type="GO" id="GO:1990234">
    <property type="term" value="C:transferase complex"/>
    <property type="evidence" value="ECO:0007669"/>
    <property type="project" value="UniProtKB-ARBA"/>
</dbReference>
<dbReference type="CDD" id="cd22881">
    <property type="entry name" value="Mdv1_N"/>
    <property type="match status" value="1"/>
</dbReference>
<dbReference type="CDD" id="cd00200">
    <property type="entry name" value="WD40"/>
    <property type="match status" value="1"/>
</dbReference>
<dbReference type="FunFam" id="2.130.10.10:FF:000404">
    <property type="entry name" value="Mitochondrial division protein 1"/>
    <property type="match status" value="1"/>
</dbReference>
<dbReference type="FunFam" id="2.130.10.10:FF:000881">
    <property type="entry name" value="Mitochondrial division protein 1"/>
    <property type="match status" value="1"/>
</dbReference>
<dbReference type="Gene3D" id="6.10.280.220">
    <property type="match status" value="1"/>
</dbReference>
<dbReference type="Gene3D" id="2.130.10.10">
    <property type="entry name" value="YVTN repeat-like/Quinoprotein amine dehydrogenase"/>
    <property type="match status" value="2"/>
</dbReference>
<dbReference type="InterPro" id="IPR020472">
    <property type="entry name" value="G-protein_beta_WD-40_rep"/>
</dbReference>
<dbReference type="InterPro" id="IPR015943">
    <property type="entry name" value="WD40/YVTN_repeat-like_dom_sf"/>
</dbReference>
<dbReference type="InterPro" id="IPR019775">
    <property type="entry name" value="WD40_repeat_CS"/>
</dbReference>
<dbReference type="InterPro" id="IPR036322">
    <property type="entry name" value="WD40_repeat_dom_sf"/>
</dbReference>
<dbReference type="InterPro" id="IPR001680">
    <property type="entry name" value="WD40_rpt"/>
</dbReference>
<dbReference type="PANTHER" id="PTHR22847:SF637">
    <property type="entry name" value="WD REPEAT DOMAIN 5B"/>
    <property type="match status" value="1"/>
</dbReference>
<dbReference type="PANTHER" id="PTHR22847">
    <property type="entry name" value="WD40 REPEAT PROTEIN"/>
    <property type="match status" value="1"/>
</dbReference>
<dbReference type="Pfam" id="PF00400">
    <property type="entry name" value="WD40"/>
    <property type="match status" value="4"/>
</dbReference>
<dbReference type="PRINTS" id="PR00320">
    <property type="entry name" value="GPROTEINBRPT"/>
</dbReference>
<dbReference type="SMART" id="SM00320">
    <property type="entry name" value="WD40"/>
    <property type="match status" value="6"/>
</dbReference>
<dbReference type="SUPFAM" id="SSF50978">
    <property type="entry name" value="WD40 repeat-like"/>
    <property type="match status" value="1"/>
</dbReference>
<dbReference type="PROSITE" id="PS00678">
    <property type="entry name" value="WD_REPEATS_1"/>
    <property type="match status" value="3"/>
</dbReference>
<dbReference type="PROSITE" id="PS50082">
    <property type="entry name" value="WD_REPEATS_2"/>
    <property type="match status" value="5"/>
</dbReference>
<dbReference type="PROSITE" id="PS50294">
    <property type="entry name" value="WD_REPEATS_REGION"/>
    <property type="match status" value="1"/>
</dbReference>
<comment type="function">
    <text evidence="1">Involved in mitochondrial fission. Acts as an adapter protein required to form mitochondrial fission complexes. Formation of these complexes is required to promote constriction and fission of the mitochondrial compartment at a late step in mitochondrial division (By similarity).</text>
</comment>
<comment type="subcellular location">
    <subcellularLocation>
        <location evidence="1">Mitochondrion outer membrane</location>
        <topology evidence="1">Peripheral membrane protein</topology>
        <orientation evidence="1">Cytoplasmic side</orientation>
    </subcellularLocation>
</comment>
<comment type="similarity">
    <text evidence="4">Belongs to the WD repeat MDV1/CAF4 family.</text>
</comment>
<comment type="sequence caution" evidence="4">
    <conflict type="erroneous gene model prediction">
        <sequence resource="EMBL-CDS" id="BAE63017"/>
    </conflict>
</comment>
<protein>
    <recommendedName>
        <fullName>Mitochondrial division protein 1</fullName>
    </recommendedName>
</protein>
<evidence type="ECO:0000250" key="1"/>
<evidence type="ECO:0000255" key="2"/>
<evidence type="ECO:0000256" key="3">
    <source>
        <dbReference type="SAM" id="MobiDB-lite"/>
    </source>
</evidence>
<evidence type="ECO:0000305" key="4"/>
<feature type="chain" id="PRO_0000330099" description="Mitochondrial division protein 1">
    <location>
        <begin position="1"/>
        <end position="650"/>
    </location>
</feature>
<feature type="repeat" description="WD 1">
    <location>
        <begin position="314"/>
        <end position="355"/>
    </location>
</feature>
<feature type="repeat" description="WD 2">
    <location>
        <begin position="356"/>
        <end position="393"/>
    </location>
</feature>
<feature type="repeat" description="WD 3">
    <location>
        <begin position="429"/>
        <end position="468"/>
    </location>
</feature>
<feature type="repeat" description="WD 4">
    <location>
        <begin position="474"/>
        <end position="531"/>
    </location>
</feature>
<feature type="repeat" description="WD 5">
    <location>
        <begin position="534"/>
        <end position="573"/>
    </location>
</feature>
<feature type="repeat" description="WD 6">
    <location>
        <begin position="575"/>
        <end position="610"/>
    </location>
</feature>
<feature type="repeat" description="WD 7">
    <location>
        <begin position="617"/>
        <end position="650"/>
    </location>
</feature>
<feature type="region of interest" description="Disordered" evidence="3">
    <location>
        <begin position="241"/>
        <end position="261"/>
    </location>
</feature>
<feature type="region of interest" description="Disordered" evidence="3">
    <location>
        <begin position="393"/>
        <end position="413"/>
    </location>
</feature>
<feature type="coiled-coil region" evidence="2">
    <location>
        <begin position="207"/>
        <end position="247"/>
    </location>
</feature>
<sequence length="650" mass="71705">MDKHRRDESPSGLSDIVEHDGLLGTGLTTRHIEAFGRKVTSTAGHLIGPTGDGNPAHYHNAMADIQRELRRPNTQRRVFALTQTTPTDLVRSKLSTSEIQSRALSSLPDDLLANIPDDSSSYSLFEGFQASQDDIEYRKAHRRRASKSKKLLKDGENRAALPSAPAELKKERDLLSRRMELMGVRKNMCSSEIHDIDNKIANLHNMRKIVLDRLAGLEMEEAELEHELTELENKLEDIQEETPETAVVGTPKSSANDESMASEDPAMDASFMSESIYQKIPSPKSLKHKSKRKRSMPILHEHFSPGSLIKEMEAHTDMVTAIDFDYPFGTMITAALDDTVRVWDLNVGRCTGFLEGHNASVRCLQIEDNIVATGSMDASVKLWDLSRARSRPRSSRINKHEDEEDAADDASQVSHSTTLEDCHVFSLDSHVGEVTALHFRGDNLISGSADKTLRQWDLVKGRCVQTLDVLWAAAQADTLNGDSTWRPSGRVPDASADFVGALQCFDAALACGTADGMVRLWDLRSGQVHRSLVGHTGPVTCLQFDDVHLVTGSMDRSIRIWDLRMGSIYDAFAYDKPVTSMKFDAKRIVAAAGESVVKVYDKADGNHWDCGAGVGADEQGPLPATVDRVCLKDGFLVEGRQDGIVGAWTC</sequence>
<keyword id="KW-0175">Coiled coil</keyword>
<keyword id="KW-0472">Membrane</keyword>
<keyword id="KW-0496">Mitochondrion</keyword>
<keyword id="KW-1000">Mitochondrion outer membrane</keyword>
<keyword id="KW-1185">Reference proteome</keyword>
<keyword id="KW-0677">Repeat</keyword>
<keyword id="KW-0853">WD repeat</keyword>
<proteinExistence type="inferred from homology"/>
<reference key="1">
    <citation type="journal article" date="2005" name="Nature">
        <title>Genome sequencing and analysis of Aspergillus oryzae.</title>
        <authorList>
            <person name="Machida M."/>
            <person name="Asai K."/>
            <person name="Sano M."/>
            <person name="Tanaka T."/>
            <person name="Kumagai T."/>
            <person name="Terai G."/>
            <person name="Kusumoto K."/>
            <person name="Arima T."/>
            <person name="Akita O."/>
            <person name="Kashiwagi Y."/>
            <person name="Abe K."/>
            <person name="Gomi K."/>
            <person name="Horiuchi H."/>
            <person name="Kitamoto K."/>
            <person name="Kobayashi T."/>
            <person name="Takeuchi M."/>
            <person name="Denning D.W."/>
            <person name="Galagan J.E."/>
            <person name="Nierman W.C."/>
            <person name="Yu J."/>
            <person name="Archer D.B."/>
            <person name="Bennett J.W."/>
            <person name="Bhatnagar D."/>
            <person name="Cleveland T.E."/>
            <person name="Fedorova N.D."/>
            <person name="Gotoh O."/>
            <person name="Horikawa H."/>
            <person name="Hosoyama A."/>
            <person name="Ichinomiya M."/>
            <person name="Igarashi R."/>
            <person name="Iwashita K."/>
            <person name="Juvvadi P.R."/>
            <person name="Kato M."/>
            <person name="Kato Y."/>
            <person name="Kin T."/>
            <person name="Kokubun A."/>
            <person name="Maeda H."/>
            <person name="Maeyama N."/>
            <person name="Maruyama J."/>
            <person name="Nagasaki H."/>
            <person name="Nakajima T."/>
            <person name="Oda K."/>
            <person name="Okada K."/>
            <person name="Paulsen I."/>
            <person name="Sakamoto K."/>
            <person name="Sawano T."/>
            <person name="Takahashi M."/>
            <person name="Takase K."/>
            <person name="Terabayashi Y."/>
            <person name="Wortman J.R."/>
            <person name="Yamada O."/>
            <person name="Yamagata Y."/>
            <person name="Anazawa H."/>
            <person name="Hata Y."/>
            <person name="Koide Y."/>
            <person name="Komori T."/>
            <person name="Koyama Y."/>
            <person name="Minetoki T."/>
            <person name="Suharnan S."/>
            <person name="Tanaka A."/>
            <person name="Isono K."/>
            <person name="Kuhara S."/>
            <person name="Ogasawara N."/>
            <person name="Kikuchi H."/>
        </authorList>
    </citation>
    <scope>NUCLEOTIDE SEQUENCE [LARGE SCALE GENOMIC DNA]</scope>
    <source>
        <strain>ATCC 42149 / RIB 40</strain>
    </source>
</reference>
<name>MDV1_ASPOR</name>
<accession>Q2U5Z8</accession>
<gene>
    <name type="primary">mdv1</name>
    <name type="ORF">AO090120000439</name>
</gene>